<keyword id="KW-0472">Membrane</keyword>
<keyword id="KW-1185">Reference proteome</keyword>
<keyword id="KW-0732">Signal</keyword>
<keyword id="KW-0812">Transmembrane</keyword>
<keyword id="KW-1133">Transmembrane helix</keyword>
<reference key="1">
    <citation type="journal article" date="2013" name="Nature">
        <title>The zebrafish reference genome sequence and its relationship to the human genome.</title>
        <authorList>
            <person name="Howe K."/>
            <person name="Clark M.D."/>
            <person name="Torroja C.F."/>
            <person name="Torrance J."/>
            <person name="Berthelot C."/>
            <person name="Muffato M."/>
            <person name="Collins J.E."/>
            <person name="Humphray S."/>
            <person name="McLaren K."/>
            <person name="Matthews L."/>
            <person name="McLaren S."/>
            <person name="Sealy I."/>
            <person name="Caccamo M."/>
            <person name="Churcher C."/>
            <person name="Scott C."/>
            <person name="Barrett J.C."/>
            <person name="Koch R."/>
            <person name="Rauch G.J."/>
            <person name="White S."/>
            <person name="Chow W."/>
            <person name="Kilian B."/>
            <person name="Quintais L.T."/>
            <person name="Guerra-Assuncao J.A."/>
            <person name="Zhou Y."/>
            <person name="Gu Y."/>
            <person name="Yen J."/>
            <person name="Vogel J.H."/>
            <person name="Eyre T."/>
            <person name="Redmond S."/>
            <person name="Banerjee R."/>
            <person name="Chi J."/>
            <person name="Fu B."/>
            <person name="Langley E."/>
            <person name="Maguire S.F."/>
            <person name="Laird G.K."/>
            <person name="Lloyd D."/>
            <person name="Kenyon E."/>
            <person name="Donaldson S."/>
            <person name="Sehra H."/>
            <person name="Almeida-King J."/>
            <person name="Loveland J."/>
            <person name="Trevanion S."/>
            <person name="Jones M."/>
            <person name="Quail M."/>
            <person name="Willey D."/>
            <person name="Hunt A."/>
            <person name="Burton J."/>
            <person name="Sims S."/>
            <person name="McLay K."/>
            <person name="Plumb B."/>
            <person name="Davis J."/>
            <person name="Clee C."/>
            <person name="Oliver K."/>
            <person name="Clark R."/>
            <person name="Riddle C."/>
            <person name="Elliot D."/>
            <person name="Threadgold G."/>
            <person name="Harden G."/>
            <person name="Ware D."/>
            <person name="Begum S."/>
            <person name="Mortimore B."/>
            <person name="Kerry G."/>
            <person name="Heath P."/>
            <person name="Phillimore B."/>
            <person name="Tracey A."/>
            <person name="Corby N."/>
            <person name="Dunn M."/>
            <person name="Johnson C."/>
            <person name="Wood J."/>
            <person name="Clark S."/>
            <person name="Pelan S."/>
            <person name="Griffiths G."/>
            <person name="Smith M."/>
            <person name="Glithero R."/>
            <person name="Howden P."/>
            <person name="Barker N."/>
            <person name="Lloyd C."/>
            <person name="Stevens C."/>
            <person name="Harley J."/>
            <person name="Holt K."/>
            <person name="Panagiotidis G."/>
            <person name="Lovell J."/>
            <person name="Beasley H."/>
            <person name="Henderson C."/>
            <person name="Gordon D."/>
            <person name="Auger K."/>
            <person name="Wright D."/>
            <person name="Collins J."/>
            <person name="Raisen C."/>
            <person name="Dyer L."/>
            <person name="Leung K."/>
            <person name="Robertson L."/>
            <person name="Ambridge K."/>
            <person name="Leongamornlert D."/>
            <person name="McGuire S."/>
            <person name="Gilderthorp R."/>
            <person name="Griffiths C."/>
            <person name="Manthravadi D."/>
            <person name="Nichol S."/>
            <person name="Barker G."/>
            <person name="Whitehead S."/>
            <person name="Kay M."/>
            <person name="Brown J."/>
            <person name="Murnane C."/>
            <person name="Gray E."/>
            <person name="Humphries M."/>
            <person name="Sycamore N."/>
            <person name="Barker D."/>
            <person name="Saunders D."/>
            <person name="Wallis J."/>
            <person name="Babbage A."/>
            <person name="Hammond S."/>
            <person name="Mashreghi-Mohammadi M."/>
            <person name="Barr L."/>
            <person name="Martin S."/>
            <person name="Wray P."/>
            <person name="Ellington A."/>
            <person name="Matthews N."/>
            <person name="Ellwood M."/>
            <person name="Woodmansey R."/>
            <person name="Clark G."/>
            <person name="Cooper J."/>
            <person name="Tromans A."/>
            <person name="Grafham D."/>
            <person name="Skuce C."/>
            <person name="Pandian R."/>
            <person name="Andrews R."/>
            <person name="Harrison E."/>
            <person name="Kimberley A."/>
            <person name="Garnett J."/>
            <person name="Fosker N."/>
            <person name="Hall R."/>
            <person name="Garner P."/>
            <person name="Kelly D."/>
            <person name="Bird C."/>
            <person name="Palmer S."/>
            <person name="Gehring I."/>
            <person name="Berger A."/>
            <person name="Dooley C.M."/>
            <person name="Ersan-Urun Z."/>
            <person name="Eser C."/>
            <person name="Geiger H."/>
            <person name="Geisler M."/>
            <person name="Karotki L."/>
            <person name="Kirn A."/>
            <person name="Konantz J."/>
            <person name="Konantz M."/>
            <person name="Oberlander M."/>
            <person name="Rudolph-Geiger S."/>
            <person name="Teucke M."/>
            <person name="Lanz C."/>
            <person name="Raddatz G."/>
            <person name="Osoegawa K."/>
            <person name="Zhu B."/>
            <person name="Rapp A."/>
            <person name="Widaa S."/>
            <person name="Langford C."/>
            <person name="Yang F."/>
            <person name="Schuster S.C."/>
            <person name="Carter N.P."/>
            <person name="Harrow J."/>
            <person name="Ning Z."/>
            <person name="Herrero J."/>
            <person name="Searle S.M."/>
            <person name="Enright A."/>
            <person name="Geisler R."/>
            <person name="Plasterk R.H."/>
            <person name="Lee C."/>
            <person name="Westerfield M."/>
            <person name="de Jong P.J."/>
            <person name="Zon L.I."/>
            <person name="Postlethwait J.H."/>
            <person name="Nusslein-Volhard C."/>
            <person name="Hubbard T.J."/>
            <person name="Roest Crollius H."/>
            <person name="Rogers J."/>
            <person name="Stemple D.L."/>
        </authorList>
    </citation>
    <scope>NUCLEOTIDE SEQUENCE [LARGE SCALE GENOMIC DNA]</scope>
    <source>
        <strain>Tuebingen</strain>
    </source>
</reference>
<reference key="2">
    <citation type="submission" date="2007-07" db="EMBL/GenBank/DDBJ databases">
        <authorList>
            <consortium name="NIH - Zebrafish Gene Collection (ZGC) project"/>
        </authorList>
    </citation>
    <scope>NUCLEOTIDE SEQUENCE [LARGE SCALE MRNA]</scope>
    <source>
        <tissue>Brain</tissue>
        <tissue>Eye</tissue>
    </source>
</reference>
<evidence type="ECO:0000255" key="1"/>
<evidence type="ECO:0000305" key="2"/>
<organism>
    <name type="scientific">Danio rerio</name>
    <name type="common">Zebrafish</name>
    <name type="synonym">Brachydanio rerio</name>
    <dbReference type="NCBI Taxonomy" id="7955"/>
    <lineage>
        <taxon>Eukaryota</taxon>
        <taxon>Metazoa</taxon>
        <taxon>Chordata</taxon>
        <taxon>Craniata</taxon>
        <taxon>Vertebrata</taxon>
        <taxon>Euteleostomi</taxon>
        <taxon>Actinopterygii</taxon>
        <taxon>Neopterygii</taxon>
        <taxon>Teleostei</taxon>
        <taxon>Ostariophysi</taxon>
        <taxon>Cypriniformes</taxon>
        <taxon>Danionidae</taxon>
        <taxon>Danioninae</taxon>
        <taxon>Danio</taxon>
    </lineage>
</organism>
<sequence length="294" mass="33297">MAAGKLLLYAGLSLSLCALGMLAVAICSDHWYETDARRYRERCRSFSSRRKDPGFIYIPNNSLPLRASRSRLDRWEEKLLLARNRRQLFAMSAADECSKRYNSTNMGLWSKCHRLGFDQEIEDLIRNGSIARCSYIKYHYSSATIPKDLSYNITKTIRQDEWHSLHLRRMTAGFMGMAVAIILFGWIIGMLGCCWDRGLMQYVAGLLFLMGGTFCIISLCTCVAGINFELSRYPRYIYGLPDDISHGYGWSMFCAWGGLGLSLIAGFFCTLAPSVQPIPRSTCPKSRQENGTVC</sequence>
<accession>Q1L8F4</accession>
<accession>A7E2P1</accession>
<accession>Q6DGZ4</accession>
<name>T178B_DANRE</name>
<protein>
    <recommendedName>
        <fullName>Transmembrane protein 178B</fullName>
    </recommendedName>
</protein>
<feature type="signal peptide" evidence="1">
    <location>
        <begin position="1"/>
        <end position="23"/>
    </location>
</feature>
<feature type="chain" id="PRO_0000419262" description="Transmembrane protein 178B">
    <location>
        <begin position="24"/>
        <end position="294"/>
    </location>
</feature>
<feature type="transmembrane region" description="Helical" evidence="1">
    <location>
        <begin position="172"/>
        <end position="192"/>
    </location>
</feature>
<feature type="transmembrane region" description="Helical" evidence="1">
    <location>
        <begin position="206"/>
        <end position="226"/>
    </location>
</feature>
<feature type="transmembrane region" description="Helical" evidence="1">
    <location>
        <begin position="252"/>
        <end position="272"/>
    </location>
</feature>
<feature type="sequence conflict" description="In Ref. 2; AAI50450." evidence="2" ref="2">
    <original>Y</original>
    <variation>C</variation>
    <location>
        <position position="140"/>
    </location>
</feature>
<feature type="sequence conflict" description="In Ref. 2; AAH76190." evidence="2" ref="2">
    <original>D</original>
    <variation>G</variation>
    <location>
        <position position="243"/>
    </location>
</feature>
<dbReference type="EMBL" id="BX005210">
    <property type="status" value="NOT_ANNOTATED_CDS"/>
    <property type="molecule type" value="Genomic_DNA"/>
</dbReference>
<dbReference type="EMBL" id="CR792454">
    <property type="protein sequence ID" value="CAK05026.1"/>
    <property type="molecule type" value="Genomic_DNA"/>
</dbReference>
<dbReference type="EMBL" id="BC150449">
    <property type="protein sequence ID" value="AAI50450.1"/>
    <property type="molecule type" value="mRNA"/>
</dbReference>
<dbReference type="EMBL" id="BC076190">
    <property type="protein sequence ID" value="AAH76190.1"/>
    <property type="molecule type" value="mRNA"/>
</dbReference>
<dbReference type="RefSeq" id="NP_001002396.2">
    <property type="nucleotide sequence ID" value="NM_001002396.2"/>
</dbReference>
<dbReference type="FunCoup" id="Q1L8F4">
    <property type="interactions" value="106"/>
</dbReference>
<dbReference type="STRING" id="7955.ENSDARP00000036408"/>
<dbReference type="PaxDb" id="7955-ENSDARP00000036408"/>
<dbReference type="Ensembl" id="ENSDART00000036779">
    <property type="protein sequence ID" value="ENSDARP00000036408"/>
    <property type="gene ID" value="ENSDARG00000006747"/>
</dbReference>
<dbReference type="Ensembl" id="ENSDART00000182399">
    <property type="protein sequence ID" value="ENSDARP00000154510"/>
    <property type="gene ID" value="ENSDARG00000006747"/>
</dbReference>
<dbReference type="GeneID" id="436669"/>
<dbReference type="KEGG" id="dre:436669"/>
<dbReference type="AGR" id="ZFIN:ZDB-GENE-040718-92"/>
<dbReference type="CTD" id="436669"/>
<dbReference type="ZFIN" id="ZDB-GENE-040718-92">
    <property type="gene designation" value="tmem178bb"/>
</dbReference>
<dbReference type="eggNOG" id="ENOG502QSX0">
    <property type="taxonomic scope" value="Eukaryota"/>
</dbReference>
<dbReference type="HOGENOM" id="CLU_961492_0_0_1"/>
<dbReference type="InParanoid" id="Q1L8F4"/>
<dbReference type="OMA" id="RQHNSTN"/>
<dbReference type="OrthoDB" id="8809386at2759"/>
<dbReference type="PhylomeDB" id="Q1L8F4"/>
<dbReference type="TreeFam" id="TF331307"/>
<dbReference type="PRO" id="PR:Q1L8F4"/>
<dbReference type="Proteomes" id="UP000000437">
    <property type="component" value="Chromosome 4"/>
</dbReference>
<dbReference type="Bgee" id="ENSDARG00000006747">
    <property type="expression patterns" value="Expressed in retina and 13 other cell types or tissues"/>
</dbReference>
<dbReference type="GO" id="GO:0016020">
    <property type="term" value="C:membrane"/>
    <property type="evidence" value="ECO:0000318"/>
    <property type="project" value="GO_Central"/>
</dbReference>
<dbReference type="Gene3D" id="1.20.140.150">
    <property type="match status" value="1"/>
</dbReference>
<dbReference type="InterPro" id="IPR004031">
    <property type="entry name" value="PMP22/EMP/MP20/Claudin"/>
</dbReference>
<dbReference type="InterPro" id="IPR039625">
    <property type="entry name" value="T178A/B"/>
</dbReference>
<dbReference type="PANTHER" id="PTHR32005:SF1">
    <property type="entry name" value="TRANSMEMBRANE PROTEIN 178B"/>
    <property type="match status" value="1"/>
</dbReference>
<dbReference type="PANTHER" id="PTHR32005">
    <property type="entry name" value="TRANSMEMBRANE PROTEIN 178B-RELATED"/>
    <property type="match status" value="1"/>
</dbReference>
<dbReference type="Pfam" id="PF13903">
    <property type="entry name" value="Claudin_2"/>
    <property type="match status" value="1"/>
</dbReference>
<dbReference type="PRINTS" id="PR01077">
    <property type="entry name" value="CLAUDIN"/>
</dbReference>
<proteinExistence type="evidence at transcript level"/>
<comment type="subcellular location">
    <subcellularLocation>
        <location evidence="2">Membrane</location>
        <topology evidence="2">Multi-pass membrane protein</topology>
    </subcellularLocation>
</comment>
<comment type="similarity">
    <text evidence="2">Belongs to the TMEM178 family.</text>
</comment>
<gene>
    <name type="primary">tmem178b</name>
    <name type="ORF">zgc:92710</name>
</gene>